<keyword id="KW-0256">Endoplasmic reticulum</keyword>
<keyword id="KW-0407">Ion channel</keyword>
<keyword id="KW-0406">Ion transport</keyword>
<keyword id="KW-0472">Membrane</keyword>
<keyword id="KW-0630">Potassium</keyword>
<keyword id="KW-0631">Potassium channel</keyword>
<keyword id="KW-0633">Potassium transport</keyword>
<keyword id="KW-1185">Reference proteome</keyword>
<keyword id="KW-0812">Transmembrane</keyword>
<keyword id="KW-1133">Transmembrane helix</keyword>
<keyword id="KW-0813">Transport</keyword>
<organism>
    <name type="scientific">Rattus norvegicus</name>
    <name type="common">Rat</name>
    <dbReference type="NCBI Taxonomy" id="10116"/>
    <lineage>
        <taxon>Eukaryota</taxon>
        <taxon>Metazoa</taxon>
        <taxon>Chordata</taxon>
        <taxon>Craniata</taxon>
        <taxon>Vertebrata</taxon>
        <taxon>Euteleostomi</taxon>
        <taxon>Mammalia</taxon>
        <taxon>Eutheria</taxon>
        <taxon>Euarchontoglires</taxon>
        <taxon>Glires</taxon>
        <taxon>Rodentia</taxon>
        <taxon>Myomorpha</taxon>
        <taxon>Muroidea</taxon>
        <taxon>Muridae</taxon>
        <taxon>Murinae</taxon>
        <taxon>Rattus</taxon>
    </lineage>
</organism>
<comment type="function">
    <text evidence="1">Intracellular monovalent cation channel required for maintenance of rapid intracellular calcium release. Acts as a potassium counter-ion channel that functions in synchronization with calcium release from intracellular stores. Activated by increased cytosolic Ca(2+) levels.</text>
</comment>
<comment type="catalytic activity">
    <reaction evidence="1">
        <text>K(+)(in) = K(+)(out)</text>
        <dbReference type="Rhea" id="RHEA:29463"/>
        <dbReference type="ChEBI" id="CHEBI:29103"/>
    </reaction>
</comment>
<comment type="activity regulation">
    <text evidence="1">Channel activity is activated by increased cytosolic Ca(2+) levels and blocked by luminal high Ca(2+) levels.</text>
</comment>
<comment type="subunit">
    <text evidence="1">Homotrimer; conformation seems to be controled by binding to diacylglycerol (DAG).</text>
</comment>
<comment type="subcellular location">
    <subcellularLocation>
        <location evidence="2">Endoplasmic reticulum membrane</location>
        <topology evidence="2">Multi-pass membrane protein</topology>
    </subcellularLocation>
</comment>
<comment type="similarity">
    <text evidence="6">Belongs to the TMEM38 family.</text>
</comment>
<protein>
    <recommendedName>
        <fullName>Trimeric intracellular cation channel type B</fullName>
        <shortName>TRIC-B</shortName>
        <shortName>TRICB</shortName>
    </recommendedName>
    <alternativeName>
        <fullName>Transmembrane protein 38B</fullName>
    </alternativeName>
</protein>
<evidence type="ECO:0000250" key="1">
    <source>
        <dbReference type="UniProtKB" id="Q6GN30"/>
    </source>
</evidence>
<evidence type="ECO:0000250" key="2">
    <source>
        <dbReference type="UniProtKB" id="Q9DAV9"/>
    </source>
</evidence>
<evidence type="ECO:0000250" key="3">
    <source>
        <dbReference type="UniProtKB" id="Q9NA73"/>
    </source>
</evidence>
<evidence type="ECO:0000255" key="4"/>
<evidence type="ECO:0000256" key="5">
    <source>
        <dbReference type="SAM" id="MobiDB-lite"/>
    </source>
</evidence>
<evidence type="ECO:0000305" key="6"/>
<name>TM38B_RAT</name>
<sequence>MEYPWDDLTLAFSRTSMFPFFDIAHYLVSVMALKQRPGAVAAAWSNPLSSWLSAMLHCFGGGILSCILLAEPPLKFLTNHTNILLASSIWYIVFFCPRDLVSQGYSYQPIQLLAAGMKEVTRTWKIVGGVAHANGYYRNGWIVMIAVGWARGAGGAIITACEQLLKGDWKPEGDEWLKMSFPCKVTLLGSIMFTFQHTRHLAISKHDLMFLYTIFLVTIKVTMMMTKDAAVTLTPFEDTLTRMLFGRQQQQFSLSEKKAEVKPSSNGSASSASKRGTEPPSSAKRHAKKED</sequence>
<reference key="1">
    <citation type="journal article" date="2004" name="Genome Res.">
        <title>The status, quality, and expansion of the NIH full-length cDNA project: the Mammalian Gene Collection (MGC).</title>
        <authorList>
            <consortium name="The MGC Project Team"/>
        </authorList>
    </citation>
    <scope>NUCLEOTIDE SEQUENCE [LARGE SCALE MRNA]</scope>
    <source>
        <tissue>Kidney</tissue>
    </source>
</reference>
<feature type="chain" id="PRO_0000291526" description="Trimeric intracellular cation channel type B">
    <location>
        <begin position="1"/>
        <end position="291"/>
    </location>
</feature>
<feature type="topological domain" description="Lumenal" evidence="6">
    <location>
        <begin position="1"/>
        <end position="16"/>
    </location>
</feature>
<feature type="transmembrane region" description="Helical;Name=1" evidence="4">
    <location>
        <begin position="17"/>
        <end position="33"/>
    </location>
</feature>
<feature type="topological domain" description="Cytoplasmic" evidence="6">
    <location>
        <begin position="34"/>
        <end position="47"/>
    </location>
</feature>
<feature type="transmembrane region" description="Helical;Name=2" evidence="4">
    <location>
        <begin position="48"/>
        <end position="69"/>
    </location>
</feature>
<feature type="topological domain" description="Lumenal" evidence="6">
    <location>
        <begin position="70"/>
        <end position="80"/>
    </location>
</feature>
<feature type="transmembrane region" description="Helical;Name=3" evidence="4">
    <location>
        <begin position="81"/>
        <end position="99"/>
    </location>
</feature>
<feature type="topological domain" description="Cytoplasmic" evidence="6">
    <location>
        <begin position="100"/>
        <end position="103"/>
    </location>
</feature>
<feature type="transmembrane region" description="Helical;Name=4" evidence="4">
    <location>
        <begin position="104"/>
        <end position="122"/>
    </location>
</feature>
<feature type="topological domain" description="Lumenal" evidence="6">
    <location>
        <begin position="123"/>
        <end position="138"/>
    </location>
</feature>
<feature type="transmembrane region" description="Helical;Name=5" evidence="4">
    <location>
        <begin position="139"/>
        <end position="156"/>
    </location>
</feature>
<feature type="topological domain" description="Cytoplasmic" evidence="6">
    <location>
        <begin position="157"/>
        <end position="179"/>
    </location>
</feature>
<feature type="transmembrane region" description="Helical;Name=6" evidence="4">
    <location>
        <begin position="180"/>
        <end position="197"/>
    </location>
</feature>
<feature type="topological domain" description="Lumenal" evidence="6">
    <location>
        <begin position="198"/>
        <end position="206"/>
    </location>
</feature>
<feature type="transmembrane region" description="Helical;Name=7" evidence="4">
    <location>
        <begin position="207"/>
        <end position="225"/>
    </location>
</feature>
<feature type="topological domain" description="Cytoplasmic" evidence="6">
    <location>
        <begin position="226"/>
        <end position="291"/>
    </location>
</feature>
<feature type="region of interest" description="Disordered" evidence="5">
    <location>
        <begin position="254"/>
        <end position="291"/>
    </location>
</feature>
<feature type="compositionally biased region" description="Low complexity" evidence="5">
    <location>
        <begin position="264"/>
        <end position="273"/>
    </location>
</feature>
<feature type="binding site" evidence="3">
    <location>
        <position position="118"/>
    </location>
    <ligand>
        <name>a 1,2-diacyl-sn-glycero-3-phospho-(1D-myo-inositol-4,5-bisphosphate)</name>
        <dbReference type="ChEBI" id="CHEBI:58456"/>
    </ligand>
</feature>
<feature type="binding site" evidence="3">
    <location>
        <position position="122"/>
    </location>
    <ligand>
        <name>a 1,2-diacyl-sn-glycero-3-phospho-(1D-myo-inositol-4,5-bisphosphate)</name>
        <dbReference type="ChEBI" id="CHEBI:58456"/>
    </ligand>
</feature>
<proteinExistence type="evidence at transcript level"/>
<dbReference type="EMBL" id="BC079336">
    <property type="protein sequence ID" value="AAH79336.1"/>
    <property type="molecule type" value="mRNA"/>
</dbReference>
<dbReference type="RefSeq" id="NP_001014213.1">
    <property type="nucleotide sequence ID" value="NM_001014191.1"/>
</dbReference>
<dbReference type="SMR" id="Q68FV1"/>
<dbReference type="FunCoup" id="Q68FV1">
    <property type="interactions" value="1428"/>
</dbReference>
<dbReference type="STRING" id="10116.ENSRNOP00000033050"/>
<dbReference type="PhosphoSitePlus" id="Q68FV1"/>
<dbReference type="PaxDb" id="10116-ENSRNOP00000033050"/>
<dbReference type="Ensembl" id="ENSRNOT00000034570.4">
    <property type="protein sequence ID" value="ENSRNOP00000033050.3"/>
    <property type="gene ID" value="ENSRNOG00000028063.5"/>
</dbReference>
<dbReference type="GeneID" id="362521"/>
<dbReference type="KEGG" id="rno:362521"/>
<dbReference type="UCSC" id="RGD:1305703">
    <property type="organism name" value="rat"/>
</dbReference>
<dbReference type="AGR" id="RGD:1305703"/>
<dbReference type="CTD" id="55151"/>
<dbReference type="RGD" id="1305703">
    <property type="gene designation" value="Tmem38b"/>
</dbReference>
<dbReference type="eggNOG" id="KOG3944">
    <property type="taxonomic scope" value="Eukaryota"/>
</dbReference>
<dbReference type="GeneTree" id="ENSGT00390000018845"/>
<dbReference type="HOGENOM" id="CLU_076376_0_0_1"/>
<dbReference type="InParanoid" id="Q68FV1"/>
<dbReference type="OMA" id="HNELLRP"/>
<dbReference type="OrthoDB" id="195817at2759"/>
<dbReference type="PhylomeDB" id="Q68FV1"/>
<dbReference type="TreeFam" id="TF313483"/>
<dbReference type="PRO" id="PR:Q68FV1"/>
<dbReference type="Proteomes" id="UP000002494">
    <property type="component" value="Chromosome 5"/>
</dbReference>
<dbReference type="Bgee" id="ENSRNOG00000028063">
    <property type="expression patterns" value="Expressed in quadriceps femoris and 20 other cell types or tissues"/>
</dbReference>
<dbReference type="GO" id="GO:0005783">
    <property type="term" value="C:endoplasmic reticulum"/>
    <property type="evidence" value="ECO:0000250"/>
    <property type="project" value="UniProtKB"/>
</dbReference>
<dbReference type="GO" id="GO:0005789">
    <property type="term" value="C:endoplasmic reticulum membrane"/>
    <property type="evidence" value="ECO:0000266"/>
    <property type="project" value="RGD"/>
</dbReference>
<dbReference type="GO" id="GO:0042802">
    <property type="term" value="F:identical protein binding"/>
    <property type="evidence" value="ECO:0007669"/>
    <property type="project" value="InterPro"/>
</dbReference>
<dbReference type="GO" id="GO:0005267">
    <property type="term" value="F:potassium channel activity"/>
    <property type="evidence" value="ECO:0000250"/>
    <property type="project" value="UniProtKB"/>
</dbReference>
<dbReference type="GO" id="GO:0060348">
    <property type="term" value="P:bone development"/>
    <property type="evidence" value="ECO:0000266"/>
    <property type="project" value="RGD"/>
</dbReference>
<dbReference type="GO" id="GO:0030282">
    <property type="term" value="P:bone mineralization"/>
    <property type="evidence" value="ECO:0000266"/>
    <property type="project" value="RGD"/>
</dbReference>
<dbReference type="GO" id="GO:0071313">
    <property type="term" value="P:cellular response to caffeine"/>
    <property type="evidence" value="ECO:0000266"/>
    <property type="project" value="RGD"/>
</dbReference>
<dbReference type="GO" id="GO:0007029">
    <property type="term" value="P:endoplasmic reticulum organization"/>
    <property type="evidence" value="ECO:0000266"/>
    <property type="project" value="RGD"/>
</dbReference>
<dbReference type="GO" id="GO:0051649">
    <property type="term" value="P:establishment of localization in cell"/>
    <property type="evidence" value="ECO:0000266"/>
    <property type="project" value="RGD"/>
</dbReference>
<dbReference type="GO" id="GO:0070278">
    <property type="term" value="P:extracellular matrix constituent secretion"/>
    <property type="evidence" value="ECO:0000266"/>
    <property type="project" value="RGD"/>
</dbReference>
<dbReference type="GO" id="GO:0048286">
    <property type="term" value="P:lung alveolus development"/>
    <property type="evidence" value="ECO:0000266"/>
    <property type="project" value="RGD"/>
</dbReference>
<dbReference type="GO" id="GO:0060487">
    <property type="term" value="P:lung epithelial cell differentiation"/>
    <property type="evidence" value="ECO:0000266"/>
    <property type="project" value="RGD"/>
</dbReference>
<dbReference type="GO" id="GO:0001503">
    <property type="term" value="P:ossification"/>
    <property type="evidence" value="ECO:0000266"/>
    <property type="project" value="RGD"/>
</dbReference>
<dbReference type="GO" id="GO:0008654">
    <property type="term" value="P:phospholipid biosynthetic process"/>
    <property type="evidence" value="ECO:0000266"/>
    <property type="project" value="RGD"/>
</dbReference>
<dbReference type="GO" id="GO:0010881">
    <property type="term" value="P:regulation of cardiac muscle contraction by regulation of the release of sequestered calcium ion"/>
    <property type="evidence" value="ECO:0000266"/>
    <property type="project" value="RGD"/>
</dbReference>
<dbReference type="GO" id="GO:0051279">
    <property type="term" value="P:regulation of release of sequestered calcium ion into cytosol"/>
    <property type="evidence" value="ECO:0000250"/>
    <property type="project" value="UniProtKB"/>
</dbReference>
<dbReference type="GO" id="GO:0051209">
    <property type="term" value="P:release of sequestered calcium ion into cytosol"/>
    <property type="evidence" value="ECO:0000266"/>
    <property type="project" value="RGD"/>
</dbReference>
<dbReference type="GO" id="GO:1903514">
    <property type="term" value="P:release of sequestered calcium ion into cytosol by endoplasmic reticulum"/>
    <property type="evidence" value="ECO:0000266"/>
    <property type="project" value="RGD"/>
</dbReference>
<dbReference type="GO" id="GO:0014808">
    <property type="term" value="P:release of sequestered calcium ion into cytosol by sarcoplasmic reticulum"/>
    <property type="evidence" value="ECO:0000266"/>
    <property type="project" value="RGD"/>
</dbReference>
<dbReference type="GO" id="GO:0061033">
    <property type="term" value="P:secretion by lung epithelial cell involved in lung growth"/>
    <property type="evidence" value="ECO:0000266"/>
    <property type="project" value="RGD"/>
</dbReference>
<dbReference type="InterPro" id="IPR007866">
    <property type="entry name" value="TRIC_channel"/>
</dbReference>
<dbReference type="PANTHER" id="PTHR12454">
    <property type="entry name" value="TRIMERIC INTRACELLULAR CATION CHANNEL"/>
    <property type="match status" value="1"/>
</dbReference>
<dbReference type="PANTHER" id="PTHR12454:SF5">
    <property type="entry name" value="TRIMERIC INTRACELLULAR CATION CHANNEL TYPE B"/>
    <property type="match status" value="1"/>
</dbReference>
<dbReference type="Pfam" id="PF05197">
    <property type="entry name" value="TRIC"/>
    <property type="match status" value="1"/>
</dbReference>
<accession>Q68FV1</accession>
<gene>
    <name type="primary">Tmem38b</name>
</gene>